<gene>
    <name evidence="1" type="primary">pyrD</name>
    <name type="ordered locus">IL1280</name>
</gene>
<reference key="1">
    <citation type="journal article" date="2004" name="Proc. Natl. Acad. Sci. U.S.A.">
        <title>Genome sequence of the deep-sea gamma-proteobacterium Idiomarina loihiensis reveals amino acid fermentation as a source of carbon and energy.</title>
        <authorList>
            <person name="Hou S."/>
            <person name="Saw J.H."/>
            <person name="Lee K.S."/>
            <person name="Freitas T.A."/>
            <person name="Belisle C."/>
            <person name="Kawarabayasi Y."/>
            <person name="Donachie S.P."/>
            <person name="Pikina A."/>
            <person name="Galperin M.Y."/>
            <person name="Koonin E.V."/>
            <person name="Makarova K.S."/>
            <person name="Omelchenko M.V."/>
            <person name="Sorokin A."/>
            <person name="Wolf Y.I."/>
            <person name="Li Q.X."/>
            <person name="Keum Y.S."/>
            <person name="Campbell S."/>
            <person name="Denery J."/>
            <person name="Aizawa S."/>
            <person name="Shibata S."/>
            <person name="Malahoff A."/>
            <person name="Alam M."/>
        </authorList>
    </citation>
    <scope>NUCLEOTIDE SEQUENCE [LARGE SCALE GENOMIC DNA]</scope>
    <source>
        <strain>ATCC BAA-735 / DSM 15497 / L2-TR</strain>
    </source>
</reference>
<evidence type="ECO:0000255" key="1">
    <source>
        <dbReference type="HAMAP-Rule" id="MF_00225"/>
    </source>
</evidence>
<comment type="function">
    <text evidence="1">Catalyzes the conversion of dihydroorotate to orotate with quinone as electron acceptor.</text>
</comment>
<comment type="catalytic activity">
    <reaction evidence="1">
        <text>(S)-dihydroorotate + a quinone = orotate + a quinol</text>
        <dbReference type="Rhea" id="RHEA:30187"/>
        <dbReference type="ChEBI" id="CHEBI:24646"/>
        <dbReference type="ChEBI" id="CHEBI:30839"/>
        <dbReference type="ChEBI" id="CHEBI:30864"/>
        <dbReference type="ChEBI" id="CHEBI:132124"/>
        <dbReference type="EC" id="1.3.5.2"/>
    </reaction>
</comment>
<comment type="cofactor">
    <cofactor evidence="1">
        <name>FMN</name>
        <dbReference type="ChEBI" id="CHEBI:58210"/>
    </cofactor>
    <text evidence="1">Binds 1 FMN per subunit.</text>
</comment>
<comment type="pathway">
    <text evidence="1">Pyrimidine metabolism; UMP biosynthesis via de novo pathway; orotate from (S)-dihydroorotate (quinone route): step 1/1.</text>
</comment>
<comment type="subunit">
    <text evidence="1">Monomer.</text>
</comment>
<comment type="subcellular location">
    <subcellularLocation>
        <location evidence="1">Cell membrane</location>
        <topology evidence="1">Peripheral membrane protein</topology>
    </subcellularLocation>
</comment>
<comment type="similarity">
    <text evidence="1">Belongs to the dihydroorotate dehydrogenase family. Type 2 subfamily.</text>
</comment>
<sequence>MYNLIKPLLFRQDPEKTHELMLGILSKWHRTPLSLFWKQNVASKPVRVMGIDFPNPVGLAAGLDKNAECIDAFSQMGFGFIEVGTVTPVAQPGNDKPRLFRLTEDEAIINRMGFNNDGVDELVKNVKASSYKGVLGINIGKNKNTPEEQAIDDYLACLNKVYPYADYVTINISSPNTPGLRNLQHGSSLDGLLSSLKTAQLTLAKEYERYVPLVVKIAPDLEDHEVEVMAQSLLKNEMDGVIATNTTLSRDGLQSSQAGEAGGLSGKPLQDKSTRVIELLCKTLQRKIPVIGVGGIDSVESAEAKLKAGASLVQVYTGFIYQGPGLIRSIVSHL</sequence>
<keyword id="KW-1003">Cell membrane</keyword>
<keyword id="KW-0285">Flavoprotein</keyword>
<keyword id="KW-0288">FMN</keyword>
<keyword id="KW-0472">Membrane</keyword>
<keyword id="KW-0560">Oxidoreductase</keyword>
<keyword id="KW-0665">Pyrimidine biosynthesis</keyword>
<keyword id="KW-1185">Reference proteome</keyword>
<organism>
    <name type="scientific">Idiomarina loihiensis (strain ATCC BAA-735 / DSM 15497 / L2-TR)</name>
    <dbReference type="NCBI Taxonomy" id="283942"/>
    <lineage>
        <taxon>Bacteria</taxon>
        <taxon>Pseudomonadati</taxon>
        <taxon>Pseudomonadota</taxon>
        <taxon>Gammaproteobacteria</taxon>
        <taxon>Alteromonadales</taxon>
        <taxon>Idiomarinaceae</taxon>
        <taxon>Idiomarina</taxon>
    </lineage>
</organism>
<feature type="chain" id="PRO_0000148447" description="Dihydroorotate dehydrogenase (quinone)">
    <location>
        <begin position="1"/>
        <end position="334"/>
    </location>
</feature>
<feature type="active site" description="Nucleophile" evidence="1">
    <location>
        <position position="174"/>
    </location>
</feature>
<feature type="binding site" evidence="1">
    <location>
        <begin position="61"/>
        <end position="65"/>
    </location>
    <ligand>
        <name>FMN</name>
        <dbReference type="ChEBI" id="CHEBI:58210"/>
    </ligand>
</feature>
<feature type="binding site" evidence="1">
    <location>
        <position position="65"/>
    </location>
    <ligand>
        <name>substrate</name>
    </ligand>
</feature>
<feature type="binding site" evidence="1">
    <location>
        <position position="85"/>
    </location>
    <ligand>
        <name>FMN</name>
        <dbReference type="ChEBI" id="CHEBI:58210"/>
    </ligand>
</feature>
<feature type="binding site" evidence="1">
    <location>
        <begin position="110"/>
        <end position="114"/>
    </location>
    <ligand>
        <name>substrate</name>
    </ligand>
</feature>
<feature type="binding site" evidence="1">
    <location>
        <position position="138"/>
    </location>
    <ligand>
        <name>FMN</name>
        <dbReference type="ChEBI" id="CHEBI:58210"/>
    </ligand>
</feature>
<feature type="binding site" evidence="1">
    <location>
        <position position="171"/>
    </location>
    <ligand>
        <name>FMN</name>
        <dbReference type="ChEBI" id="CHEBI:58210"/>
    </ligand>
</feature>
<feature type="binding site" evidence="1">
    <location>
        <position position="171"/>
    </location>
    <ligand>
        <name>substrate</name>
    </ligand>
</feature>
<feature type="binding site" evidence="1">
    <location>
        <position position="176"/>
    </location>
    <ligand>
        <name>substrate</name>
    </ligand>
</feature>
<feature type="binding site" evidence="1">
    <location>
        <position position="216"/>
    </location>
    <ligand>
        <name>FMN</name>
        <dbReference type="ChEBI" id="CHEBI:58210"/>
    </ligand>
</feature>
<feature type="binding site" evidence="1">
    <location>
        <position position="244"/>
    </location>
    <ligand>
        <name>FMN</name>
        <dbReference type="ChEBI" id="CHEBI:58210"/>
    </ligand>
</feature>
<feature type="binding site" evidence="1">
    <location>
        <begin position="245"/>
        <end position="246"/>
    </location>
    <ligand>
        <name>substrate</name>
    </ligand>
</feature>
<feature type="binding site" evidence="1">
    <location>
        <position position="266"/>
    </location>
    <ligand>
        <name>FMN</name>
        <dbReference type="ChEBI" id="CHEBI:58210"/>
    </ligand>
</feature>
<feature type="binding site" evidence="1">
    <location>
        <position position="295"/>
    </location>
    <ligand>
        <name>FMN</name>
        <dbReference type="ChEBI" id="CHEBI:58210"/>
    </ligand>
</feature>
<feature type="binding site" evidence="1">
    <location>
        <begin position="316"/>
        <end position="317"/>
    </location>
    <ligand>
        <name>FMN</name>
        <dbReference type="ChEBI" id="CHEBI:58210"/>
    </ligand>
</feature>
<accession>Q5QX65</accession>
<proteinExistence type="inferred from homology"/>
<name>PYRD_IDILO</name>
<dbReference type="EC" id="1.3.5.2" evidence="1"/>
<dbReference type="EMBL" id="AE017340">
    <property type="protein sequence ID" value="AAV82120.1"/>
    <property type="molecule type" value="Genomic_DNA"/>
</dbReference>
<dbReference type="RefSeq" id="WP_011234526.1">
    <property type="nucleotide sequence ID" value="NC_006512.1"/>
</dbReference>
<dbReference type="SMR" id="Q5QX65"/>
<dbReference type="STRING" id="283942.IL1280"/>
<dbReference type="GeneID" id="41336455"/>
<dbReference type="KEGG" id="ilo:IL1280"/>
<dbReference type="eggNOG" id="COG0167">
    <property type="taxonomic scope" value="Bacteria"/>
</dbReference>
<dbReference type="HOGENOM" id="CLU_013640_2_0_6"/>
<dbReference type="OrthoDB" id="9802377at2"/>
<dbReference type="UniPathway" id="UPA00070">
    <property type="reaction ID" value="UER00946"/>
</dbReference>
<dbReference type="Proteomes" id="UP000001171">
    <property type="component" value="Chromosome"/>
</dbReference>
<dbReference type="GO" id="GO:0005737">
    <property type="term" value="C:cytoplasm"/>
    <property type="evidence" value="ECO:0007669"/>
    <property type="project" value="InterPro"/>
</dbReference>
<dbReference type="GO" id="GO:0005886">
    <property type="term" value="C:plasma membrane"/>
    <property type="evidence" value="ECO:0007669"/>
    <property type="project" value="UniProtKB-SubCell"/>
</dbReference>
<dbReference type="GO" id="GO:0106430">
    <property type="term" value="F:dihydroorotate dehydrogenase (quinone) activity"/>
    <property type="evidence" value="ECO:0007669"/>
    <property type="project" value="UniProtKB-EC"/>
</dbReference>
<dbReference type="GO" id="GO:0006207">
    <property type="term" value="P:'de novo' pyrimidine nucleobase biosynthetic process"/>
    <property type="evidence" value="ECO:0007669"/>
    <property type="project" value="InterPro"/>
</dbReference>
<dbReference type="GO" id="GO:0044205">
    <property type="term" value="P:'de novo' UMP biosynthetic process"/>
    <property type="evidence" value="ECO:0007669"/>
    <property type="project" value="UniProtKB-UniRule"/>
</dbReference>
<dbReference type="CDD" id="cd04738">
    <property type="entry name" value="DHOD_2_like"/>
    <property type="match status" value="1"/>
</dbReference>
<dbReference type="FunFam" id="3.20.20.70:FF:000028">
    <property type="entry name" value="Dihydroorotate dehydrogenase (quinone)"/>
    <property type="match status" value="1"/>
</dbReference>
<dbReference type="Gene3D" id="3.20.20.70">
    <property type="entry name" value="Aldolase class I"/>
    <property type="match status" value="1"/>
</dbReference>
<dbReference type="HAMAP" id="MF_00225">
    <property type="entry name" value="DHO_dh_type2"/>
    <property type="match status" value="1"/>
</dbReference>
<dbReference type="InterPro" id="IPR013785">
    <property type="entry name" value="Aldolase_TIM"/>
</dbReference>
<dbReference type="InterPro" id="IPR050074">
    <property type="entry name" value="DHO_dehydrogenase"/>
</dbReference>
<dbReference type="InterPro" id="IPR012135">
    <property type="entry name" value="Dihydroorotate_DH_1_2"/>
</dbReference>
<dbReference type="InterPro" id="IPR005719">
    <property type="entry name" value="Dihydroorotate_DH_2"/>
</dbReference>
<dbReference type="InterPro" id="IPR005720">
    <property type="entry name" value="Dihydroorotate_DH_cat"/>
</dbReference>
<dbReference type="InterPro" id="IPR001295">
    <property type="entry name" value="Dihydroorotate_DH_CS"/>
</dbReference>
<dbReference type="NCBIfam" id="NF003644">
    <property type="entry name" value="PRK05286.1-1"/>
    <property type="match status" value="1"/>
</dbReference>
<dbReference type="NCBIfam" id="NF003645">
    <property type="entry name" value="PRK05286.1-2"/>
    <property type="match status" value="1"/>
</dbReference>
<dbReference type="NCBIfam" id="NF003646">
    <property type="entry name" value="PRK05286.1-4"/>
    <property type="match status" value="1"/>
</dbReference>
<dbReference type="NCBIfam" id="NF003652">
    <property type="entry name" value="PRK05286.2-5"/>
    <property type="match status" value="1"/>
</dbReference>
<dbReference type="NCBIfam" id="TIGR01036">
    <property type="entry name" value="pyrD_sub2"/>
    <property type="match status" value="1"/>
</dbReference>
<dbReference type="PANTHER" id="PTHR48109:SF4">
    <property type="entry name" value="DIHYDROOROTATE DEHYDROGENASE (QUINONE), MITOCHONDRIAL"/>
    <property type="match status" value="1"/>
</dbReference>
<dbReference type="PANTHER" id="PTHR48109">
    <property type="entry name" value="DIHYDROOROTATE DEHYDROGENASE (QUINONE), MITOCHONDRIAL-RELATED"/>
    <property type="match status" value="1"/>
</dbReference>
<dbReference type="Pfam" id="PF01180">
    <property type="entry name" value="DHO_dh"/>
    <property type="match status" value="1"/>
</dbReference>
<dbReference type="PIRSF" id="PIRSF000164">
    <property type="entry name" value="DHO_oxidase"/>
    <property type="match status" value="1"/>
</dbReference>
<dbReference type="SUPFAM" id="SSF51395">
    <property type="entry name" value="FMN-linked oxidoreductases"/>
    <property type="match status" value="1"/>
</dbReference>
<dbReference type="PROSITE" id="PS00911">
    <property type="entry name" value="DHODEHASE_1"/>
    <property type="match status" value="1"/>
</dbReference>
<dbReference type="PROSITE" id="PS00912">
    <property type="entry name" value="DHODEHASE_2"/>
    <property type="match status" value="1"/>
</dbReference>
<protein>
    <recommendedName>
        <fullName evidence="1">Dihydroorotate dehydrogenase (quinone)</fullName>
        <ecNumber evidence="1">1.3.5.2</ecNumber>
    </recommendedName>
    <alternativeName>
        <fullName evidence="1">DHOdehase</fullName>
        <shortName evidence="1">DHOD</shortName>
        <shortName evidence="1">DHODase</shortName>
    </alternativeName>
    <alternativeName>
        <fullName evidence="1">Dihydroorotate oxidase</fullName>
    </alternativeName>
</protein>